<evidence type="ECO:0000255" key="1">
    <source>
        <dbReference type="HAMAP-Rule" id="MF_00125"/>
    </source>
</evidence>
<sequence>MATVDRWLLPDGIEEVLPPEAARIEVARRQVLDLFQSWGYEFVVTPHIEYLESLLTGAGSDLDLRTFKVIDPQSGRQMGFRADITPQVARIDAHTLKREGPSRLCYAGSVLHAQPRALSSSRSPIQLGAELYGDASPSSDVEVISLMLAMLQLADVPDVHMDLGHVGIYRGLARAAGLSGEVEQQLFDALQRKAIDEVVALTANLPPELASMLRALVDLCGGREVLDAARDRLAGAPAPVLEALDDLLAIADRLAARFPQLPLYFDLGELRGYHYHTGVVFAVFVPGVGQSIAQGGRYDDIGADFGRARPATGFSTDLKTLVTLGQAEIVLPSGGIWMPDSTDAALWQQVCQLRSEGQRVVQALPGQQVSAAREADCDRQLIQHGEHWQVMPLAS</sequence>
<protein>
    <recommendedName>
        <fullName evidence="1">ATP phosphoribosyltransferase regulatory subunit</fullName>
    </recommendedName>
</protein>
<dbReference type="EMBL" id="AE016853">
    <property type="protein sequence ID" value="AAO58366.1"/>
    <property type="molecule type" value="Genomic_DNA"/>
</dbReference>
<dbReference type="RefSeq" id="NP_794671.1">
    <property type="nucleotide sequence ID" value="NC_004578.1"/>
</dbReference>
<dbReference type="RefSeq" id="WP_005763027.1">
    <property type="nucleotide sequence ID" value="NC_004578.1"/>
</dbReference>
<dbReference type="SMR" id="Q87VJ8"/>
<dbReference type="STRING" id="223283.PSPTO_4938"/>
<dbReference type="DNASU" id="1186623"/>
<dbReference type="GeneID" id="1186623"/>
<dbReference type="KEGG" id="pst:PSPTO_4938"/>
<dbReference type="PATRIC" id="fig|223283.9.peg.5052"/>
<dbReference type="eggNOG" id="COG3705">
    <property type="taxonomic scope" value="Bacteria"/>
</dbReference>
<dbReference type="HOGENOM" id="CLU_025113_0_1_6"/>
<dbReference type="OrthoDB" id="9769617at2"/>
<dbReference type="PhylomeDB" id="Q87VJ8"/>
<dbReference type="UniPathway" id="UPA00031">
    <property type="reaction ID" value="UER00006"/>
</dbReference>
<dbReference type="Proteomes" id="UP000002515">
    <property type="component" value="Chromosome"/>
</dbReference>
<dbReference type="GO" id="GO:0005737">
    <property type="term" value="C:cytoplasm"/>
    <property type="evidence" value="ECO:0007669"/>
    <property type="project" value="UniProtKB-SubCell"/>
</dbReference>
<dbReference type="GO" id="GO:0000105">
    <property type="term" value="P:L-histidine biosynthetic process"/>
    <property type="evidence" value="ECO:0007669"/>
    <property type="project" value="UniProtKB-UniRule"/>
</dbReference>
<dbReference type="CDD" id="cd00773">
    <property type="entry name" value="HisRS-like_core"/>
    <property type="match status" value="1"/>
</dbReference>
<dbReference type="Gene3D" id="3.30.930.10">
    <property type="entry name" value="Bira Bifunctional Protein, Domain 2"/>
    <property type="match status" value="1"/>
</dbReference>
<dbReference type="HAMAP" id="MF_00125">
    <property type="entry name" value="HisZ"/>
    <property type="match status" value="1"/>
</dbReference>
<dbReference type="InterPro" id="IPR045864">
    <property type="entry name" value="aa-tRNA-synth_II/BPL/LPL"/>
</dbReference>
<dbReference type="InterPro" id="IPR041715">
    <property type="entry name" value="HisRS-like_core"/>
</dbReference>
<dbReference type="InterPro" id="IPR004516">
    <property type="entry name" value="HisRS/HisZ"/>
</dbReference>
<dbReference type="InterPro" id="IPR004517">
    <property type="entry name" value="HisZ"/>
</dbReference>
<dbReference type="NCBIfam" id="TIGR00443">
    <property type="entry name" value="hisZ_biosyn_reg"/>
    <property type="match status" value="1"/>
</dbReference>
<dbReference type="NCBIfam" id="NF008935">
    <property type="entry name" value="PRK12292.1-1"/>
    <property type="match status" value="1"/>
</dbReference>
<dbReference type="NCBIfam" id="NF008937">
    <property type="entry name" value="PRK12292.1-4"/>
    <property type="match status" value="1"/>
</dbReference>
<dbReference type="NCBIfam" id="NF009086">
    <property type="entry name" value="PRK12421.1"/>
    <property type="match status" value="1"/>
</dbReference>
<dbReference type="PANTHER" id="PTHR11476:SF7">
    <property type="entry name" value="HISTIDINE--TRNA LIGASE"/>
    <property type="match status" value="1"/>
</dbReference>
<dbReference type="PANTHER" id="PTHR11476">
    <property type="entry name" value="HISTIDYL-TRNA SYNTHETASE"/>
    <property type="match status" value="1"/>
</dbReference>
<dbReference type="Pfam" id="PF13393">
    <property type="entry name" value="tRNA-synt_His"/>
    <property type="match status" value="1"/>
</dbReference>
<dbReference type="PIRSF" id="PIRSF001549">
    <property type="entry name" value="His-tRNA_synth"/>
    <property type="match status" value="1"/>
</dbReference>
<dbReference type="SUPFAM" id="SSF55681">
    <property type="entry name" value="Class II aaRS and biotin synthetases"/>
    <property type="match status" value="1"/>
</dbReference>
<accession>Q87VJ8</accession>
<feature type="chain" id="PRO_0000171054" description="ATP phosphoribosyltransferase regulatory subunit">
    <location>
        <begin position="1"/>
        <end position="395"/>
    </location>
</feature>
<organism>
    <name type="scientific">Pseudomonas syringae pv. tomato (strain ATCC BAA-871 / DC3000)</name>
    <dbReference type="NCBI Taxonomy" id="223283"/>
    <lineage>
        <taxon>Bacteria</taxon>
        <taxon>Pseudomonadati</taxon>
        <taxon>Pseudomonadota</taxon>
        <taxon>Gammaproteobacteria</taxon>
        <taxon>Pseudomonadales</taxon>
        <taxon>Pseudomonadaceae</taxon>
        <taxon>Pseudomonas</taxon>
    </lineage>
</organism>
<keyword id="KW-0028">Amino-acid biosynthesis</keyword>
<keyword id="KW-0963">Cytoplasm</keyword>
<keyword id="KW-0368">Histidine biosynthesis</keyword>
<keyword id="KW-1185">Reference proteome</keyword>
<reference key="1">
    <citation type="journal article" date="2003" name="Proc. Natl. Acad. Sci. U.S.A.">
        <title>The complete genome sequence of the Arabidopsis and tomato pathogen Pseudomonas syringae pv. tomato DC3000.</title>
        <authorList>
            <person name="Buell C.R."/>
            <person name="Joardar V."/>
            <person name="Lindeberg M."/>
            <person name="Selengut J."/>
            <person name="Paulsen I.T."/>
            <person name="Gwinn M.L."/>
            <person name="Dodson R.J."/>
            <person name="DeBoy R.T."/>
            <person name="Durkin A.S."/>
            <person name="Kolonay J.F."/>
            <person name="Madupu R."/>
            <person name="Daugherty S.C."/>
            <person name="Brinkac L.M."/>
            <person name="Beanan M.J."/>
            <person name="Haft D.H."/>
            <person name="Nelson W.C."/>
            <person name="Davidsen T.M."/>
            <person name="Zafar N."/>
            <person name="Zhou L."/>
            <person name="Liu J."/>
            <person name="Yuan Q."/>
            <person name="Khouri H.M."/>
            <person name="Fedorova N.B."/>
            <person name="Tran B."/>
            <person name="Russell D."/>
            <person name="Berry K.J."/>
            <person name="Utterback T.R."/>
            <person name="Van Aken S.E."/>
            <person name="Feldblyum T.V."/>
            <person name="D'Ascenzo M."/>
            <person name="Deng W.-L."/>
            <person name="Ramos A.R."/>
            <person name="Alfano J.R."/>
            <person name="Cartinhour S."/>
            <person name="Chatterjee A.K."/>
            <person name="Delaney T.P."/>
            <person name="Lazarowitz S.G."/>
            <person name="Martin G.B."/>
            <person name="Schneider D.J."/>
            <person name="Tang X."/>
            <person name="Bender C.L."/>
            <person name="White O."/>
            <person name="Fraser C.M."/>
            <person name="Collmer A."/>
        </authorList>
    </citation>
    <scope>NUCLEOTIDE SEQUENCE [LARGE SCALE GENOMIC DNA]</scope>
    <source>
        <strain>ATCC BAA-871 / DC3000</strain>
    </source>
</reference>
<gene>
    <name evidence="1" type="primary">hisZ</name>
    <name type="ordered locus">PSPTO_4938</name>
</gene>
<name>HISZ_PSESM</name>
<comment type="function">
    <text evidence="1">Required for the first step of histidine biosynthesis. May allow the feedback regulation of ATP phosphoribosyltransferase activity by histidine.</text>
</comment>
<comment type="pathway">
    <text evidence="1">Amino-acid biosynthesis; L-histidine biosynthesis; L-histidine from 5-phospho-alpha-D-ribose 1-diphosphate: step 1/9.</text>
</comment>
<comment type="subunit">
    <text evidence="1">Heteromultimer composed of HisG and HisZ subunits.</text>
</comment>
<comment type="subcellular location">
    <subcellularLocation>
        <location evidence="1">Cytoplasm</location>
    </subcellularLocation>
</comment>
<comment type="miscellaneous">
    <text>This function is generally fulfilled by the C-terminal part of HisG, which is missing in some bacteria such as this one.</text>
</comment>
<comment type="similarity">
    <text evidence="1">Belongs to the class-II aminoacyl-tRNA synthetase family. HisZ subfamily.</text>
</comment>
<proteinExistence type="inferred from homology"/>